<sequence>MAAVDSFYLLYREIARSCNCYMEALALVGAWYTARKSITVICDFYSLVRLHFIPRLGSRPDLIKQYGRWAVISGATDGIGKAYAEELASHGLNVILISQEEEKLQAAAKHIADTYRVETLVLVADFSRGREIYAPIREALRDRDIGILVNDVGAFYPYPQYFSQVPEDTLWDIVNVNIAAASLMVHIVLPGMVERKKGAIVTVSSGSCCKPTPQLAAFSASKAYLDHFSRALQYEYASKGIFVQSLIPFYVTSSGAAPASFLHRCPWLAPSPRVYAQHAVSTLGISKRTTGYWSHSIQFLFAQYMPEWLWVWGANLLNRSLRKEALSCQA</sequence>
<feature type="initiator methionine" description="Removed" evidence="2">
    <location>
        <position position="1"/>
    </location>
</feature>
<feature type="chain" id="PRO_0000313672" description="Inactive hydroxysteroid dehydrogenase-like protein 1">
    <location>
        <begin position="2"/>
        <end position="330"/>
    </location>
</feature>
<feature type="region of interest" description="Required for mitochondria translocation" evidence="1">
    <location>
        <begin position="2"/>
        <end position="82"/>
    </location>
</feature>
<feature type="binding site" evidence="1">
    <location>
        <begin position="74"/>
        <end position="80"/>
    </location>
    <ligand>
        <name>NADP(+)</name>
        <dbReference type="ChEBI" id="CHEBI:58349"/>
    </ligand>
</feature>
<feature type="binding site" evidence="1">
    <location>
        <position position="125"/>
    </location>
    <ligand>
        <name>NADP(+)</name>
        <dbReference type="ChEBI" id="CHEBI:58349"/>
    </ligand>
</feature>
<feature type="binding site" evidence="1">
    <location>
        <position position="222"/>
    </location>
    <ligand>
        <name>NADP(+)</name>
        <dbReference type="ChEBI" id="CHEBI:58349"/>
    </ligand>
</feature>
<feature type="modified residue" description="N-acetylalanine" evidence="2">
    <location>
        <position position="2"/>
    </location>
</feature>
<keyword id="KW-0007">Acetylation</keyword>
<keyword id="KW-0496">Mitochondrion</keyword>
<keyword id="KW-0521">NADP</keyword>
<keyword id="KW-1185">Reference proteome</keyword>
<gene>
    <name type="primary">Hsdl1</name>
</gene>
<proteinExistence type="evidence at protein level"/>
<comment type="subunit">
    <text evidence="1">Interacts with STYXL1.</text>
</comment>
<comment type="subcellular location">
    <subcellularLocation>
        <location evidence="1">Mitochondrion</location>
    </subcellularLocation>
</comment>
<comment type="similarity">
    <text evidence="3">Belongs to the short-chain dehydrogenases/reductases (SDR) family. 17-beta-HSD 3 subfamily.</text>
</comment>
<comment type="caution">
    <text evidence="3">Although it belongs to the SDR family, Phe-218 is present instead of the conserved Tyr which is an active site residue. It is therefore expected that this protein lacks oxidoreductase activity.</text>
</comment>
<dbReference type="EMBL" id="AK088412">
    <property type="protein sequence ID" value="BAC40340.1"/>
    <property type="molecule type" value="mRNA"/>
</dbReference>
<dbReference type="EMBL" id="AK150638">
    <property type="protein sequence ID" value="BAE29726.1"/>
    <property type="molecule type" value="mRNA"/>
</dbReference>
<dbReference type="EMBL" id="AK152392">
    <property type="protein sequence ID" value="BAE31180.1"/>
    <property type="molecule type" value="mRNA"/>
</dbReference>
<dbReference type="EMBL" id="BC065074">
    <property type="protein sequence ID" value="AAH65074.1"/>
    <property type="molecule type" value="mRNA"/>
</dbReference>
<dbReference type="CCDS" id="CCDS22708.1"/>
<dbReference type="RefSeq" id="NP_001365945.1">
    <property type="nucleotide sequence ID" value="NM_001379016.1"/>
</dbReference>
<dbReference type="RefSeq" id="NP_001365946.1">
    <property type="nucleotide sequence ID" value="NM_001379017.1"/>
</dbReference>
<dbReference type="RefSeq" id="NP_780394.1">
    <property type="nucleotide sequence ID" value="NM_175185.5"/>
</dbReference>
<dbReference type="RefSeq" id="XP_006531459.1">
    <property type="nucleotide sequence ID" value="XM_006531396.1"/>
</dbReference>
<dbReference type="RefSeq" id="XP_006531460.1">
    <property type="nucleotide sequence ID" value="XM_006531397.5"/>
</dbReference>
<dbReference type="SMR" id="Q8BTX9"/>
<dbReference type="BioGRID" id="215432">
    <property type="interactions" value="4"/>
</dbReference>
<dbReference type="FunCoup" id="Q8BTX9">
    <property type="interactions" value="2844"/>
</dbReference>
<dbReference type="STRING" id="10090.ENSMUSP00000044371"/>
<dbReference type="GlyGen" id="Q8BTX9">
    <property type="glycosylation" value="1 site, 1 O-linked glycan (1 site)"/>
</dbReference>
<dbReference type="PhosphoSitePlus" id="Q8BTX9"/>
<dbReference type="SwissPalm" id="Q8BTX9"/>
<dbReference type="jPOST" id="Q8BTX9"/>
<dbReference type="PaxDb" id="10090-ENSMUSP00000044371"/>
<dbReference type="PeptideAtlas" id="Q8BTX9"/>
<dbReference type="ProteomicsDB" id="273387"/>
<dbReference type="Pumba" id="Q8BTX9"/>
<dbReference type="Antibodypedia" id="30543">
    <property type="antibodies" value="61 antibodies from 20 providers"/>
</dbReference>
<dbReference type="DNASU" id="72552"/>
<dbReference type="Ensembl" id="ENSMUST00000036049.6">
    <property type="protein sequence ID" value="ENSMUSP00000044371.5"/>
    <property type="gene ID" value="ENSMUSG00000034189.6"/>
</dbReference>
<dbReference type="GeneID" id="72552"/>
<dbReference type="KEGG" id="mmu:72552"/>
<dbReference type="UCSC" id="uc009npu.2">
    <property type="organism name" value="mouse"/>
</dbReference>
<dbReference type="AGR" id="MGI:1919802"/>
<dbReference type="CTD" id="83693"/>
<dbReference type="MGI" id="MGI:1919802">
    <property type="gene designation" value="Hsdl1"/>
</dbReference>
<dbReference type="VEuPathDB" id="HostDB:ENSMUSG00000034189"/>
<dbReference type="eggNOG" id="KOG1014">
    <property type="taxonomic scope" value="Eukaryota"/>
</dbReference>
<dbReference type="GeneTree" id="ENSGT00940000160053"/>
<dbReference type="HOGENOM" id="CLU_010194_38_0_1"/>
<dbReference type="InParanoid" id="Q8BTX9"/>
<dbReference type="OMA" id="QYGLMKC"/>
<dbReference type="OrthoDB" id="5545019at2759"/>
<dbReference type="PhylomeDB" id="Q8BTX9"/>
<dbReference type="TreeFam" id="TF314591"/>
<dbReference type="BioGRID-ORCS" id="72552">
    <property type="hits" value="2 hits in 79 CRISPR screens"/>
</dbReference>
<dbReference type="ChiTaRS" id="Hsdl1">
    <property type="organism name" value="mouse"/>
</dbReference>
<dbReference type="PRO" id="PR:Q8BTX9"/>
<dbReference type="Proteomes" id="UP000000589">
    <property type="component" value="Chromosome 8"/>
</dbReference>
<dbReference type="RNAct" id="Q8BTX9">
    <property type="molecule type" value="protein"/>
</dbReference>
<dbReference type="Bgee" id="ENSMUSG00000034189">
    <property type="expression patterns" value="Expressed in otolith organ and 230 other cell types or tissues"/>
</dbReference>
<dbReference type="ExpressionAtlas" id="Q8BTX9">
    <property type="expression patterns" value="baseline and differential"/>
</dbReference>
<dbReference type="GO" id="GO:0045111">
    <property type="term" value="C:intermediate filament cytoskeleton"/>
    <property type="evidence" value="ECO:0007669"/>
    <property type="project" value="Ensembl"/>
</dbReference>
<dbReference type="GO" id="GO:0005739">
    <property type="term" value="C:mitochondrion"/>
    <property type="evidence" value="ECO:0007005"/>
    <property type="project" value="MGI"/>
</dbReference>
<dbReference type="CDD" id="cd05356">
    <property type="entry name" value="17beta-HSD1_like_SDR_c"/>
    <property type="match status" value="1"/>
</dbReference>
<dbReference type="FunFam" id="3.40.50.720:FF:000137">
    <property type="entry name" value="Hydroxysteroid (17-beta) dehydrogenase 3"/>
    <property type="match status" value="1"/>
</dbReference>
<dbReference type="Gene3D" id="3.40.50.720">
    <property type="entry name" value="NAD(P)-binding Rossmann-like Domain"/>
    <property type="match status" value="1"/>
</dbReference>
<dbReference type="InterPro" id="IPR052149">
    <property type="entry name" value="17-beta-HSD3-like"/>
</dbReference>
<dbReference type="InterPro" id="IPR036291">
    <property type="entry name" value="NAD(P)-bd_dom_sf"/>
</dbReference>
<dbReference type="InterPro" id="IPR002347">
    <property type="entry name" value="SDR_fam"/>
</dbReference>
<dbReference type="PANTHER" id="PTHR44889">
    <property type="entry name" value="INACTIVE HYDROXYSTEROID DEHYDROGENASE-LIKE PROTEIN 1"/>
    <property type="match status" value="1"/>
</dbReference>
<dbReference type="PANTHER" id="PTHR44889:SF1">
    <property type="entry name" value="INACTIVE HYDROXYSTEROID DEHYDROGENASE-LIKE PROTEIN 1"/>
    <property type="match status" value="1"/>
</dbReference>
<dbReference type="Pfam" id="PF00106">
    <property type="entry name" value="adh_short"/>
    <property type="match status" value="1"/>
</dbReference>
<dbReference type="PIRSF" id="PIRSF000126">
    <property type="entry name" value="11-beta-HSD1"/>
    <property type="match status" value="1"/>
</dbReference>
<dbReference type="PRINTS" id="PR00081">
    <property type="entry name" value="GDHRDH"/>
</dbReference>
<dbReference type="SUPFAM" id="SSF51735">
    <property type="entry name" value="NAD(P)-binding Rossmann-fold domains"/>
    <property type="match status" value="1"/>
</dbReference>
<organism>
    <name type="scientific">Mus musculus</name>
    <name type="common">Mouse</name>
    <dbReference type="NCBI Taxonomy" id="10090"/>
    <lineage>
        <taxon>Eukaryota</taxon>
        <taxon>Metazoa</taxon>
        <taxon>Chordata</taxon>
        <taxon>Craniata</taxon>
        <taxon>Vertebrata</taxon>
        <taxon>Euteleostomi</taxon>
        <taxon>Mammalia</taxon>
        <taxon>Eutheria</taxon>
        <taxon>Euarchontoglires</taxon>
        <taxon>Glires</taxon>
        <taxon>Rodentia</taxon>
        <taxon>Myomorpha</taxon>
        <taxon>Muroidea</taxon>
        <taxon>Muridae</taxon>
        <taxon>Murinae</taxon>
        <taxon>Mus</taxon>
        <taxon>Mus</taxon>
    </lineage>
</organism>
<evidence type="ECO:0000250" key="1"/>
<evidence type="ECO:0000250" key="2">
    <source>
        <dbReference type="UniProtKB" id="Q3SXM5"/>
    </source>
</evidence>
<evidence type="ECO:0000305" key="3"/>
<reference key="1">
    <citation type="journal article" date="2005" name="Science">
        <title>The transcriptional landscape of the mammalian genome.</title>
        <authorList>
            <person name="Carninci P."/>
            <person name="Kasukawa T."/>
            <person name="Katayama S."/>
            <person name="Gough J."/>
            <person name="Frith M.C."/>
            <person name="Maeda N."/>
            <person name="Oyama R."/>
            <person name="Ravasi T."/>
            <person name="Lenhard B."/>
            <person name="Wells C."/>
            <person name="Kodzius R."/>
            <person name="Shimokawa K."/>
            <person name="Bajic V.B."/>
            <person name="Brenner S.E."/>
            <person name="Batalov S."/>
            <person name="Forrest A.R."/>
            <person name="Zavolan M."/>
            <person name="Davis M.J."/>
            <person name="Wilming L.G."/>
            <person name="Aidinis V."/>
            <person name="Allen J.E."/>
            <person name="Ambesi-Impiombato A."/>
            <person name="Apweiler R."/>
            <person name="Aturaliya R.N."/>
            <person name="Bailey T.L."/>
            <person name="Bansal M."/>
            <person name="Baxter L."/>
            <person name="Beisel K.W."/>
            <person name="Bersano T."/>
            <person name="Bono H."/>
            <person name="Chalk A.M."/>
            <person name="Chiu K.P."/>
            <person name="Choudhary V."/>
            <person name="Christoffels A."/>
            <person name="Clutterbuck D.R."/>
            <person name="Crowe M.L."/>
            <person name="Dalla E."/>
            <person name="Dalrymple B.P."/>
            <person name="de Bono B."/>
            <person name="Della Gatta G."/>
            <person name="di Bernardo D."/>
            <person name="Down T."/>
            <person name="Engstrom P."/>
            <person name="Fagiolini M."/>
            <person name="Faulkner G."/>
            <person name="Fletcher C.F."/>
            <person name="Fukushima T."/>
            <person name="Furuno M."/>
            <person name="Futaki S."/>
            <person name="Gariboldi M."/>
            <person name="Georgii-Hemming P."/>
            <person name="Gingeras T.R."/>
            <person name="Gojobori T."/>
            <person name="Green R.E."/>
            <person name="Gustincich S."/>
            <person name="Harbers M."/>
            <person name="Hayashi Y."/>
            <person name="Hensch T.K."/>
            <person name="Hirokawa N."/>
            <person name="Hill D."/>
            <person name="Huminiecki L."/>
            <person name="Iacono M."/>
            <person name="Ikeo K."/>
            <person name="Iwama A."/>
            <person name="Ishikawa T."/>
            <person name="Jakt M."/>
            <person name="Kanapin A."/>
            <person name="Katoh M."/>
            <person name="Kawasawa Y."/>
            <person name="Kelso J."/>
            <person name="Kitamura H."/>
            <person name="Kitano H."/>
            <person name="Kollias G."/>
            <person name="Krishnan S.P."/>
            <person name="Kruger A."/>
            <person name="Kummerfeld S.K."/>
            <person name="Kurochkin I.V."/>
            <person name="Lareau L.F."/>
            <person name="Lazarevic D."/>
            <person name="Lipovich L."/>
            <person name="Liu J."/>
            <person name="Liuni S."/>
            <person name="McWilliam S."/>
            <person name="Madan Babu M."/>
            <person name="Madera M."/>
            <person name="Marchionni L."/>
            <person name="Matsuda H."/>
            <person name="Matsuzawa S."/>
            <person name="Miki H."/>
            <person name="Mignone F."/>
            <person name="Miyake S."/>
            <person name="Morris K."/>
            <person name="Mottagui-Tabar S."/>
            <person name="Mulder N."/>
            <person name="Nakano N."/>
            <person name="Nakauchi H."/>
            <person name="Ng P."/>
            <person name="Nilsson R."/>
            <person name="Nishiguchi S."/>
            <person name="Nishikawa S."/>
            <person name="Nori F."/>
            <person name="Ohara O."/>
            <person name="Okazaki Y."/>
            <person name="Orlando V."/>
            <person name="Pang K.C."/>
            <person name="Pavan W.J."/>
            <person name="Pavesi G."/>
            <person name="Pesole G."/>
            <person name="Petrovsky N."/>
            <person name="Piazza S."/>
            <person name="Reed J."/>
            <person name="Reid J.F."/>
            <person name="Ring B.Z."/>
            <person name="Ringwald M."/>
            <person name="Rost B."/>
            <person name="Ruan Y."/>
            <person name="Salzberg S.L."/>
            <person name="Sandelin A."/>
            <person name="Schneider C."/>
            <person name="Schoenbach C."/>
            <person name="Sekiguchi K."/>
            <person name="Semple C.A."/>
            <person name="Seno S."/>
            <person name="Sessa L."/>
            <person name="Sheng Y."/>
            <person name="Shibata Y."/>
            <person name="Shimada H."/>
            <person name="Shimada K."/>
            <person name="Silva D."/>
            <person name="Sinclair B."/>
            <person name="Sperling S."/>
            <person name="Stupka E."/>
            <person name="Sugiura K."/>
            <person name="Sultana R."/>
            <person name="Takenaka Y."/>
            <person name="Taki K."/>
            <person name="Tammoja K."/>
            <person name="Tan S.L."/>
            <person name="Tang S."/>
            <person name="Taylor M.S."/>
            <person name="Tegner J."/>
            <person name="Teichmann S.A."/>
            <person name="Ueda H.R."/>
            <person name="van Nimwegen E."/>
            <person name="Verardo R."/>
            <person name="Wei C.L."/>
            <person name="Yagi K."/>
            <person name="Yamanishi H."/>
            <person name="Zabarovsky E."/>
            <person name="Zhu S."/>
            <person name="Zimmer A."/>
            <person name="Hide W."/>
            <person name="Bult C."/>
            <person name="Grimmond S.M."/>
            <person name="Teasdale R.D."/>
            <person name="Liu E.T."/>
            <person name="Brusic V."/>
            <person name="Quackenbush J."/>
            <person name="Wahlestedt C."/>
            <person name="Mattick J.S."/>
            <person name="Hume D.A."/>
            <person name="Kai C."/>
            <person name="Sasaki D."/>
            <person name="Tomaru Y."/>
            <person name="Fukuda S."/>
            <person name="Kanamori-Katayama M."/>
            <person name="Suzuki M."/>
            <person name="Aoki J."/>
            <person name="Arakawa T."/>
            <person name="Iida J."/>
            <person name="Imamura K."/>
            <person name="Itoh M."/>
            <person name="Kato T."/>
            <person name="Kawaji H."/>
            <person name="Kawagashira N."/>
            <person name="Kawashima T."/>
            <person name="Kojima M."/>
            <person name="Kondo S."/>
            <person name="Konno H."/>
            <person name="Nakano K."/>
            <person name="Ninomiya N."/>
            <person name="Nishio T."/>
            <person name="Okada M."/>
            <person name="Plessy C."/>
            <person name="Shibata K."/>
            <person name="Shiraki T."/>
            <person name="Suzuki S."/>
            <person name="Tagami M."/>
            <person name="Waki K."/>
            <person name="Watahiki A."/>
            <person name="Okamura-Oho Y."/>
            <person name="Suzuki H."/>
            <person name="Kawai J."/>
            <person name="Hayashizaki Y."/>
        </authorList>
    </citation>
    <scope>NUCLEOTIDE SEQUENCE [LARGE SCALE MRNA]</scope>
    <source>
        <strain>C57BL/6J</strain>
        <strain>NOD</strain>
        <tissue>Bone marrow</tissue>
        <tissue>Thymus</tissue>
    </source>
</reference>
<reference key="2">
    <citation type="journal article" date="2004" name="Genome Res.">
        <title>The status, quality, and expansion of the NIH full-length cDNA project: the Mammalian Gene Collection (MGC).</title>
        <authorList>
            <consortium name="The MGC Project Team"/>
        </authorList>
    </citation>
    <scope>NUCLEOTIDE SEQUENCE [LARGE SCALE MRNA]</scope>
    <source>
        <strain>C57BL/6J</strain>
        <tissue>Brain</tissue>
    </source>
</reference>
<reference key="3">
    <citation type="journal article" date="2010" name="Cell">
        <title>A tissue-specific atlas of mouse protein phosphorylation and expression.</title>
        <authorList>
            <person name="Huttlin E.L."/>
            <person name="Jedrychowski M.P."/>
            <person name="Elias J.E."/>
            <person name="Goswami T."/>
            <person name="Rad R."/>
            <person name="Beausoleil S.A."/>
            <person name="Villen J."/>
            <person name="Haas W."/>
            <person name="Sowa M.E."/>
            <person name="Gygi S.P."/>
        </authorList>
    </citation>
    <scope>IDENTIFICATION BY MASS SPECTROMETRY [LARGE SCALE ANALYSIS]</scope>
    <source>
        <tissue>Brain</tissue>
        <tissue>Brown adipose tissue</tissue>
        <tissue>Heart</tissue>
        <tissue>Kidney</tissue>
        <tissue>Lung</tissue>
        <tissue>Pancreas</tissue>
        <tissue>Spleen</tissue>
        <tissue>Testis</tissue>
    </source>
</reference>
<protein>
    <recommendedName>
        <fullName>Inactive hydroxysteroid dehydrogenase-like protein 1</fullName>
    </recommendedName>
</protein>
<name>HSDL1_MOUSE</name>
<accession>Q8BTX9</accession>
<accession>Q3U839</accession>